<comment type="function">
    <text evidence="1">Functions as a component of the DNA-binding general transcription factor complex TFIID. Binding of TFIID to a promoter (with or without TATA element) is the initial step in pre-initiation complex (PIC) formation. TFIID plays a key role in the regulation of gene expression by RNA polymerase II through different activities such as transcription activator interaction, core promoter recognition and selectivity, TFIIA and TFIIB interaction, chromatin modification (histone acetylation by TAF1), facilitation of DNA opening and initiation of transcription (By similarity).</text>
</comment>
<comment type="subcellular location">
    <subcellularLocation>
        <location evidence="1">Nucleus</location>
    </subcellularLocation>
</comment>
<comment type="similarity">
    <text evidence="2">Belongs to the TAF13 family.</text>
</comment>
<evidence type="ECO:0000250" key="1"/>
<evidence type="ECO:0000305" key="2"/>
<dbReference type="EMBL" id="CU329672">
    <property type="protein sequence ID" value="CAA19300.3"/>
    <property type="molecule type" value="Genomic_DNA"/>
</dbReference>
<dbReference type="PIR" id="T41003">
    <property type="entry name" value="T41003"/>
</dbReference>
<dbReference type="RefSeq" id="NP_588527.2">
    <property type="nucleotide sequence ID" value="NM_001023515.3"/>
</dbReference>
<dbReference type="SMR" id="O60076"/>
<dbReference type="BioGRID" id="275280">
    <property type="interactions" value="1"/>
</dbReference>
<dbReference type="FunCoup" id="O60076">
    <property type="interactions" value="99"/>
</dbReference>
<dbReference type="STRING" id="284812.O60076"/>
<dbReference type="PaxDb" id="4896-SPCC1494.02c.1"/>
<dbReference type="EnsemblFungi" id="SPCC1494.02c.1">
    <property type="protein sequence ID" value="SPCC1494.02c.1:pep"/>
    <property type="gene ID" value="SPCC1494.02c"/>
</dbReference>
<dbReference type="GeneID" id="2538695"/>
<dbReference type="KEGG" id="spo:2538695"/>
<dbReference type="PomBase" id="SPCC1494.02c">
    <property type="gene designation" value="taf13"/>
</dbReference>
<dbReference type="VEuPathDB" id="FungiDB:SPCC1494.02c"/>
<dbReference type="eggNOG" id="KOG3901">
    <property type="taxonomic scope" value="Eukaryota"/>
</dbReference>
<dbReference type="HOGENOM" id="CLU_076665_4_1_1"/>
<dbReference type="InParanoid" id="O60076"/>
<dbReference type="OMA" id="QHLFTKD"/>
<dbReference type="PhylomeDB" id="O60076"/>
<dbReference type="Reactome" id="R-SPO-674695">
    <property type="pathway name" value="RNA Polymerase II Pre-transcription Events"/>
</dbReference>
<dbReference type="Reactome" id="R-SPO-6807505">
    <property type="pathway name" value="RNA polymerase II transcribes snRNA genes"/>
</dbReference>
<dbReference type="Reactome" id="R-SPO-73776">
    <property type="pathway name" value="RNA Polymerase II Promoter Escape"/>
</dbReference>
<dbReference type="Reactome" id="R-SPO-73779">
    <property type="pathway name" value="RNA Polymerase II Transcription Pre-Initiation And Promoter Opening"/>
</dbReference>
<dbReference type="Reactome" id="R-SPO-75953">
    <property type="pathway name" value="RNA Polymerase II Transcription Initiation"/>
</dbReference>
<dbReference type="Reactome" id="R-SPO-76042">
    <property type="pathway name" value="RNA Polymerase II Transcription Initiation And Promoter Clearance"/>
</dbReference>
<dbReference type="PRO" id="PR:O60076"/>
<dbReference type="Proteomes" id="UP000002485">
    <property type="component" value="Chromosome III"/>
</dbReference>
<dbReference type="GO" id="GO:0000785">
    <property type="term" value="C:chromatin"/>
    <property type="evidence" value="ECO:0000305"/>
    <property type="project" value="PomBase"/>
</dbReference>
<dbReference type="GO" id="GO:0005669">
    <property type="term" value="C:transcription factor TFIID complex"/>
    <property type="evidence" value="ECO:0000314"/>
    <property type="project" value="PomBase"/>
</dbReference>
<dbReference type="GO" id="GO:0046982">
    <property type="term" value="F:protein heterodimerization activity"/>
    <property type="evidence" value="ECO:0007669"/>
    <property type="project" value="InterPro"/>
</dbReference>
<dbReference type="GO" id="GO:0016251">
    <property type="term" value="F:RNA polymerase II general transcription initiation factor activity"/>
    <property type="evidence" value="ECO:0000269"/>
    <property type="project" value="PomBase"/>
</dbReference>
<dbReference type="GO" id="GO:0051123">
    <property type="term" value="P:RNA polymerase II preinitiation complex assembly"/>
    <property type="evidence" value="ECO:0000318"/>
    <property type="project" value="GO_Central"/>
</dbReference>
<dbReference type="GO" id="GO:0006366">
    <property type="term" value="P:transcription by RNA polymerase II"/>
    <property type="evidence" value="ECO:0000318"/>
    <property type="project" value="GO_Central"/>
</dbReference>
<dbReference type="GO" id="GO:0006367">
    <property type="term" value="P:transcription initiation at RNA polymerase II promoter"/>
    <property type="evidence" value="ECO:0000269"/>
    <property type="project" value="PomBase"/>
</dbReference>
<dbReference type="CDD" id="cd07978">
    <property type="entry name" value="HFD_TAF13"/>
    <property type="match status" value="1"/>
</dbReference>
<dbReference type="FunFam" id="1.10.20.10:FF:000071">
    <property type="entry name" value="Transcription factor TFIID complex subunit"/>
    <property type="match status" value="1"/>
</dbReference>
<dbReference type="Gene3D" id="1.10.20.10">
    <property type="entry name" value="Histone, subunit A"/>
    <property type="match status" value="1"/>
</dbReference>
<dbReference type="InterPro" id="IPR009072">
    <property type="entry name" value="Histone-fold"/>
</dbReference>
<dbReference type="InterPro" id="IPR003195">
    <property type="entry name" value="TFIID_TAF13"/>
</dbReference>
<dbReference type="PANTHER" id="PTHR11380:SF5">
    <property type="entry name" value="TRANSCRIPTION INITIATION FACTOR TFIID SUBUNIT 13"/>
    <property type="match status" value="1"/>
</dbReference>
<dbReference type="PANTHER" id="PTHR11380">
    <property type="entry name" value="TRANSCRIPTION INITIATION FACTOR TFIID/SUPT3-RELATED"/>
    <property type="match status" value="1"/>
</dbReference>
<dbReference type="Pfam" id="PF02269">
    <property type="entry name" value="TFIID-18kDa"/>
    <property type="match status" value="1"/>
</dbReference>
<dbReference type="SUPFAM" id="SSF47113">
    <property type="entry name" value="Histone-fold"/>
    <property type="match status" value="1"/>
</dbReference>
<feature type="chain" id="PRO_0000317146" description="Transcription initiation factor TFIID subunit 13">
    <location>
        <begin position="1"/>
        <end position="111"/>
    </location>
</feature>
<feature type="domain" description="Histone-fold">
    <location>
        <begin position="17"/>
        <end position="61"/>
    </location>
</feature>
<sequence>MSMENRRGRPPTRRQHLFTKDLKSLMYAFGDDVNPAPDSINVLEEIVVDYINEMCLEAARIAGNRNKVKVDDFKFALRDDPKKLGRVEELLVLQKMIADTRNVMKYNKDHF</sequence>
<gene>
    <name type="primary">taf13</name>
    <name type="ORF">SPCC1494.02c</name>
</gene>
<reference key="1">
    <citation type="journal article" date="2002" name="Nature">
        <title>The genome sequence of Schizosaccharomyces pombe.</title>
        <authorList>
            <person name="Wood V."/>
            <person name="Gwilliam R."/>
            <person name="Rajandream M.A."/>
            <person name="Lyne M.H."/>
            <person name="Lyne R."/>
            <person name="Stewart A."/>
            <person name="Sgouros J.G."/>
            <person name="Peat N."/>
            <person name="Hayles J."/>
            <person name="Baker S.G."/>
            <person name="Basham D."/>
            <person name="Bowman S."/>
            <person name="Brooks K."/>
            <person name="Brown D."/>
            <person name="Brown S."/>
            <person name="Chillingworth T."/>
            <person name="Churcher C.M."/>
            <person name="Collins M."/>
            <person name="Connor R."/>
            <person name="Cronin A."/>
            <person name="Davis P."/>
            <person name="Feltwell T."/>
            <person name="Fraser A."/>
            <person name="Gentles S."/>
            <person name="Goble A."/>
            <person name="Hamlin N."/>
            <person name="Harris D.E."/>
            <person name="Hidalgo J."/>
            <person name="Hodgson G."/>
            <person name="Holroyd S."/>
            <person name="Hornsby T."/>
            <person name="Howarth S."/>
            <person name="Huckle E.J."/>
            <person name="Hunt S."/>
            <person name="Jagels K."/>
            <person name="James K.D."/>
            <person name="Jones L."/>
            <person name="Jones M."/>
            <person name="Leather S."/>
            <person name="McDonald S."/>
            <person name="McLean J."/>
            <person name="Mooney P."/>
            <person name="Moule S."/>
            <person name="Mungall K.L."/>
            <person name="Murphy L.D."/>
            <person name="Niblett D."/>
            <person name="Odell C."/>
            <person name="Oliver K."/>
            <person name="O'Neil S."/>
            <person name="Pearson D."/>
            <person name="Quail M.A."/>
            <person name="Rabbinowitsch E."/>
            <person name="Rutherford K.M."/>
            <person name="Rutter S."/>
            <person name="Saunders D."/>
            <person name="Seeger K."/>
            <person name="Sharp S."/>
            <person name="Skelton J."/>
            <person name="Simmonds M.N."/>
            <person name="Squares R."/>
            <person name="Squares S."/>
            <person name="Stevens K."/>
            <person name="Taylor K."/>
            <person name="Taylor R.G."/>
            <person name="Tivey A."/>
            <person name="Walsh S.V."/>
            <person name="Warren T."/>
            <person name="Whitehead S."/>
            <person name="Woodward J.R."/>
            <person name="Volckaert G."/>
            <person name="Aert R."/>
            <person name="Robben J."/>
            <person name="Grymonprez B."/>
            <person name="Weltjens I."/>
            <person name="Vanstreels E."/>
            <person name="Rieger M."/>
            <person name="Schaefer M."/>
            <person name="Mueller-Auer S."/>
            <person name="Gabel C."/>
            <person name="Fuchs M."/>
            <person name="Duesterhoeft A."/>
            <person name="Fritzc C."/>
            <person name="Holzer E."/>
            <person name="Moestl D."/>
            <person name="Hilbert H."/>
            <person name="Borzym K."/>
            <person name="Langer I."/>
            <person name="Beck A."/>
            <person name="Lehrach H."/>
            <person name="Reinhardt R."/>
            <person name="Pohl T.M."/>
            <person name="Eger P."/>
            <person name="Zimmermann W."/>
            <person name="Wedler H."/>
            <person name="Wambutt R."/>
            <person name="Purnelle B."/>
            <person name="Goffeau A."/>
            <person name="Cadieu E."/>
            <person name="Dreano S."/>
            <person name="Gloux S."/>
            <person name="Lelaure V."/>
            <person name="Mottier S."/>
            <person name="Galibert F."/>
            <person name="Aves S.J."/>
            <person name="Xiang Z."/>
            <person name="Hunt C."/>
            <person name="Moore K."/>
            <person name="Hurst S.M."/>
            <person name="Lucas M."/>
            <person name="Rochet M."/>
            <person name="Gaillardin C."/>
            <person name="Tallada V.A."/>
            <person name="Garzon A."/>
            <person name="Thode G."/>
            <person name="Daga R.R."/>
            <person name="Cruzado L."/>
            <person name="Jimenez J."/>
            <person name="Sanchez M."/>
            <person name="del Rey F."/>
            <person name="Benito J."/>
            <person name="Dominguez A."/>
            <person name="Revuelta J.L."/>
            <person name="Moreno S."/>
            <person name="Armstrong J."/>
            <person name="Forsburg S.L."/>
            <person name="Cerutti L."/>
            <person name="Lowe T."/>
            <person name="McCombie W.R."/>
            <person name="Paulsen I."/>
            <person name="Potashkin J."/>
            <person name="Shpakovski G.V."/>
            <person name="Ussery D."/>
            <person name="Barrell B.G."/>
            <person name="Nurse P."/>
        </authorList>
    </citation>
    <scope>NUCLEOTIDE SEQUENCE [LARGE SCALE GENOMIC DNA]</scope>
    <source>
        <strain>972 / ATCC 24843</strain>
    </source>
</reference>
<proteinExistence type="inferred from homology"/>
<accession>O60076</accession>
<name>TAF13_SCHPO</name>
<organism>
    <name type="scientific">Schizosaccharomyces pombe (strain 972 / ATCC 24843)</name>
    <name type="common">Fission yeast</name>
    <dbReference type="NCBI Taxonomy" id="284812"/>
    <lineage>
        <taxon>Eukaryota</taxon>
        <taxon>Fungi</taxon>
        <taxon>Dikarya</taxon>
        <taxon>Ascomycota</taxon>
        <taxon>Taphrinomycotina</taxon>
        <taxon>Schizosaccharomycetes</taxon>
        <taxon>Schizosaccharomycetales</taxon>
        <taxon>Schizosaccharomycetaceae</taxon>
        <taxon>Schizosaccharomyces</taxon>
    </lineage>
</organism>
<protein>
    <recommendedName>
        <fullName>Transcription initiation factor TFIID subunit 13</fullName>
    </recommendedName>
    <alternativeName>
        <fullName>TBP-associated factor 13</fullName>
    </alternativeName>
</protein>
<keyword id="KW-0175">Coiled coil</keyword>
<keyword id="KW-0539">Nucleus</keyword>
<keyword id="KW-1185">Reference proteome</keyword>
<keyword id="KW-0804">Transcription</keyword>
<keyword id="KW-0805">Transcription regulation</keyword>